<evidence type="ECO:0000255" key="1">
    <source>
        <dbReference type="HAMAP-Rule" id="MF_04070"/>
    </source>
</evidence>
<evidence type="ECO:0000256" key="2">
    <source>
        <dbReference type="SAM" id="MobiDB-lite"/>
    </source>
</evidence>
<protein>
    <recommendedName>
        <fullName evidence="1">Nucleoprotein</fullName>
    </recommendedName>
    <alternativeName>
        <fullName evidence="1">Nucleocapsid protein</fullName>
        <shortName evidence="1">Protein N</shortName>
    </alternativeName>
</protein>
<dbReference type="EMBL" id="M30768">
    <property type="protein sequence ID" value="AAA43489.1"/>
    <property type="molecule type" value="Genomic_RNA"/>
</dbReference>
<dbReference type="EMBL" id="CY015076">
    <property type="protein sequence ID" value="ABI85099.1"/>
    <property type="molecule type" value="Genomic_RNA"/>
</dbReference>
<dbReference type="SMR" id="P15661"/>
<dbReference type="PRO" id="PR:P15661"/>
<dbReference type="Proteomes" id="UP000008584">
    <property type="component" value="Genome"/>
</dbReference>
<dbReference type="GO" id="GO:0019029">
    <property type="term" value="C:helical viral capsid"/>
    <property type="evidence" value="ECO:0007669"/>
    <property type="project" value="UniProtKB-UniRule"/>
</dbReference>
<dbReference type="GO" id="GO:0043657">
    <property type="term" value="C:host cell"/>
    <property type="evidence" value="ECO:0007669"/>
    <property type="project" value="GOC"/>
</dbReference>
<dbReference type="GO" id="GO:0042025">
    <property type="term" value="C:host cell nucleus"/>
    <property type="evidence" value="ECO:0007669"/>
    <property type="project" value="UniProtKB-SubCell"/>
</dbReference>
<dbReference type="GO" id="GO:1990904">
    <property type="term" value="C:ribonucleoprotein complex"/>
    <property type="evidence" value="ECO:0007669"/>
    <property type="project" value="UniProtKB-KW"/>
</dbReference>
<dbReference type="GO" id="GO:0019013">
    <property type="term" value="C:viral nucleocapsid"/>
    <property type="evidence" value="ECO:0007669"/>
    <property type="project" value="UniProtKB-UniRule"/>
</dbReference>
<dbReference type="GO" id="GO:0003723">
    <property type="term" value="F:RNA binding"/>
    <property type="evidence" value="ECO:0007669"/>
    <property type="project" value="UniProtKB-UniRule"/>
</dbReference>
<dbReference type="GO" id="GO:0005198">
    <property type="term" value="F:structural molecule activity"/>
    <property type="evidence" value="ECO:0007669"/>
    <property type="project" value="UniProtKB-UniRule"/>
</dbReference>
<dbReference type="GO" id="GO:0046718">
    <property type="term" value="P:symbiont entry into host cell"/>
    <property type="evidence" value="ECO:0007669"/>
    <property type="project" value="UniProtKB-KW"/>
</dbReference>
<dbReference type="GO" id="GO:0075732">
    <property type="term" value="P:viral penetration into host nucleus"/>
    <property type="evidence" value="ECO:0007669"/>
    <property type="project" value="UniProtKB-UniRule"/>
</dbReference>
<dbReference type="HAMAP" id="MF_04070">
    <property type="entry name" value="INFV_NCAP"/>
    <property type="match status" value="1"/>
</dbReference>
<dbReference type="InterPro" id="IPR002141">
    <property type="entry name" value="Flu_NP"/>
</dbReference>
<dbReference type="Pfam" id="PF00506">
    <property type="entry name" value="Flu_NP"/>
    <property type="match status" value="1"/>
</dbReference>
<dbReference type="SUPFAM" id="SSF161003">
    <property type="entry name" value="flu NP-like"/>
    <property type="match status" value="1"/>
</dbReference>
<comment type="function">
    <text evidence="1">Encapsidates the negative strand viral RNA, protecting it from nucleases. The encapsidated genomic RNA is termed the ribonucleoprotein (RNP) and serves as template for transcription and replication. The RNP needs to be localized in the host nucleus to start an infectious cycle, but is too large to diffuse through the nuclear pore complex. NP comprises at least 2 nuclear localization signals that are responsible for the active RNP import into the nucleus through cellular importin alpha/beta pathway. Later in the infection, nclear export of RNPs are mediated through viral proteins NEP interacting with M1 which binds nucleoproteins. It is possible that nucleoprotein binds directly host exportin-1/XPO1 and plays an active role in RNPs nuclear export. M1 interaction with RNP seems to hide nucleoprotein's nuclear localization signals. Soon after a virion infects a new cell, M1 dissociates from the RNP under acidification of the virion driven by M2 protein. Dissociation of M1 from RNP unmasks nucleoprotein's nuclear localization signals, targeting the RNP to the nucleus.</text>
</comment>
<comment type="subunit">
    <text evidence="1">Homomultimerizes to form the nucleocapsid. May bind host exportin-1/XPO1. Binds to viral genomic RNA. Protein-RNA contacts are mediated by a combination of electrostatic interactions between positively charged residues and the phosphate backbone and planar interactions between aromatic side chains and bases.</text>
</comment>
<comment type="subcellular location">
    <subcellularLocation>
        <location evidence="1">Virion</location>
    </subcellularLocation>
    <subcellularLocation>
        <location evidence="1">Host nucleus</location>
    </subcellularLocation>
</comment>
<comment type="PTM">
    <text evidence="1">Late in virus-infected cells, may be cleaved from a 56-kDa protein to a 53-kDa protein by a cellular caspase. This cleavage might be a marker for the onset of apoptosis in infected cells or have a specific function in virus host interaction.</text>
</comment>
<comment type="similarity">
    <text evidence="1">Belongs to the influenza viruses nucleoprotein family.</text>
</comment>
<feature type="chain" id="PRO_0000079030" description="Nucleoprotein">
    <location>
        <begin position="1"/>
        <end position="498"/>
    </location>
</feature>
<feature type="region of interest" description="Disordered" evidence="2">
    <location>
        <begin position="1"/>
        <end position="21"/>
    </location>
</feature>
<feature type="short sequence motif" description="Unconventional nuclear localization signal" evidence="1">
    <location>
        <begin position="1"/>
        <end position="18"/>
    </location>
</feature>
<feature type="short sequence motif" description="Bipartite nuclear localization signal" evidence="1">
    <location>
        <begin position="198"/>
        <end position="216"/>
    </location>
</feature>
<feature type="sequence conflict" description="In Ref. 1; AAA43489." ref="1">
    <original>S</original>
    <variation>I</variation>
    <location>
        <position position="234"/>
    </location>
</feature>
<gene>
    <name evidence="1" type="primary">NP</name>
</gene>
<organism>
    <name type="scientific">Influenza A virus (strain A/Chicken/Pennsylvania/1/1983 H5N2)</name>
    <dbReference type="NCBI Taxonomy" id="385586"/>
    <lineage>
        <taxon>Viruses</taxon>
        <taxon>Riboviria</taxon>
        <taxon>Orthornavirae</taxon>
        <taxon>Negarnaviricota</taxon>
        <taxon>Polyploviricotina</taxon>
        <taxon>Insthoviricetes</taxon>
        <taxon>Articulavirales</taxon>
        <taxon>Orthomyxoviridae</taxon>
        <taxon>Alphainfluenzavirus</taxon>
        <taxon>Alphainfluenzavirus influenzae</taxon>
        <taxon>Influenza A virus</taxon>
    </lineage>
</organism>
<organismHost>
    <name type="scientific">Aves</name>
    <dbReference type="NCBI Taxonomy" id="8782"/>
</organismHost>
<proteinExistence type="inferred from homology"/>
<reference key="1">
    <citation type="journal article" date="1990" name="J. Virol.">
        <title>Evolution of the nucleoprotein gene of influenza A virus.</title>
        <authorList>
            <person name="Gorman O.T."/>
            <person name="Bean W.J."/>
            <person name="Kawaoka Y."/>
            <person name="Webster R.G."/>
        </authorList>
    </citation>
    <scope>NUCLEOTIDE SEQUENCE [GENOMIC RNA]</scope>
</reference>
<reference key="2">
    <citation type="journal article" date="2006" name="Science">
        <title>Large-scale sequence analysis of avian influenza isolates.</title>
        <authorList>
            <person name="Obenauer J.C."/>
            <person name="Denson J."/>
            <person name="Mehta P.K."/>
            <person name="Su X."/>
            <person name="Mukatira S."/>
            <person name="Finkelstein D.B."/>
            <person name="Xu X."/>
            <person name="Wang J."/>
            <person name="Ma J."/>
            <person name="Fan Y."/>
            <person name="Rakestraw K.M."/>
            <person name="Webster R.G."/>
            <person name="Hoffmann E."/>
            <person name="Krauss S."/>
            <person name="Zheng J."/>
            <person name="Zhang Z."/>
            <person name="Naeve C.W."/>
        </authorList>
    </citation>
    <scope>NUCLEOTIDE SEQUENCE [GENOMIC RNA]</scope>
</reference>
<accession>P15661</accession>
<accession>Q0A2I3</accession>
<name>NCAP_I83A5</name>
<keyword id="KW-0167">Capsid protein</keyword>
<keyword id="KW-1139">Helical capsid protein</keyword>
<keyword id="KW-1048">Host nucleus</keyword>
<keyword id="KW-0945">Host-virus interaction</keyword>
<keyword id="KW-0687">Ribonucleoprotein</keyword>
<keyword id="KW-0694">RNA-binding</keyword>
<keyword id="KW-0543">Viral nucleoprotein</keyword>
<keyword id="KW-1163">Viral penetration into host nucleus</keyword>
<keyword id="KW-0946">Virion</keyword>
<keyword id="KW-1160">Virus entry into host cell</keyword>
<sequence>MASQGTKRSYEQMETGGERQNATEIRASVGRMVGGIGRFYIQMCTELKLSDHEGRLIQNSITIERMVLSAFDERRNRYLEEHPSAGKDPKKTGGPIYRRRDGKWVRELILYDKEEIRRIWRQANNGEDATAGLTHLMIWHSNLNDATYQRTRALVRTGMDPRMCSLMQGSTLPRRSGAAGAAVKGIGTMVMELIRMIKRGINDRNFWRGENGRRTRIAYERMCNILKGKFQTASQRAMMDQVRESRNPGNAEIEDLIFLARSALILRGSVAHKSCLPACVYGLAVASGYDFEREGYSLVGIDPFRLLQNSQVFSLIRPNENPAHKSQLVWMACHSAAFEDLRVSSFIRGTRVVPRGQLSTRGVQIASNENMDAIDSSTLELRSRYWAIRTRSGGNTNQQRASAGQISVQPTFSVQRNLPFERATIMAAFTGNTEGRTSDMRTEIIRMMENARPEDVSFQGRGVFELSDEKATNPIVPSFDMSNEGSYFFGDNAEEYDN</sequence>